<organism>
    <name type="scientific">Geobacter sulfurreducens (strain ATCC 51573 / DSM 12127 / PCA)</name>
    <dbReference type="NCBI Taxonomy" id="243231"/>
    <lineage>
        <taxon>Bacteria</taxon>
        <taxon>Pseudomonadati</taxon>
        <taxon>Thermodesulfobacteriota</taxon>
        <taxon>Desulfuromonadia</taxon>
        <taxon>Geobacterales</taxon>
        <taxon>Geobacteraceae</taxon>
        <taxon>Geobacter</taxon>
    </lineage>
</organism>
<feature type="chain" id="PRO_0000170037" description="LexA repressor 1">
    <location>
        <begin position="1"/>
        <end position="201"/>
    </location>
</feature>
<feature type="DNA-binding region" description="H-T-H motif" evidence="1">
    <location>
        <begin position="28"/>
        <end position="48"/>
    </location>
</feature>
<feature type="active site" description="For autocatalytic cleavage activity" evidence="1">
    <location>
        <position position="120"/>
    </location>
</feature>
<feature type="active site" description="For autocatalytic cleavage activity" evidence="1">
    <location>
        <position position="157"/>
    </location>
</feature>
<feature type="site" description="Cleavage; by autolysis" evidence="1">
    <location>
        <begin position="86"/>
        <end position="87"/>
    </location>
</feature>
<reference key="1">
    <citation type="journal article" date="2003" name="Science">
        <title>Genome of Geobacter sulfurreducens: metal reduction in subsurface environments.</title>
        <authorList>
            <person name="Methe B.A."/>
            <person name="Nelson K.E."/>
            <person name="Eisen J.A."/>
            <person name="Paulsen I.T."/>
            <person name="Nelson W.C."/>
            <person name="Heidelberg J.F."/>
            <person name="Wu D."/>
            <person name="Wu M."/>
            <person name="Ward N.L."/>
            <person name="Beanan M.J."/>
            <person name="Dodson R.J."/>
            <person name="Madupu R."/>
            <person name="Brinkac L.M."/>
            <person name="Daugherty S.C."/>
            <person name="DeBoy R.T."/>
            <person name="Durkin A.S."/>
            <person name="Gwinn M.L."/>
            <person name="Kolonay J.F."/>
            <person name="Sullivan S.A."/>
            <person name="Haft D.H."/>
            <person name="Selengut J."/>
            <person name="Davidsen T.M."/>
            <person name="Zafar N."/>
            <person name="White O."/>
            <person name="Tran B."/>
            <person name="Romero C."/>
            <person name="Forberger H.A."/>
            <person name="Weidman J.F."/>
            <person name="Khouri H.M."/>
            <person name="Feldblyum T.V."/>
            <person name="Utterback T.R."/>
            <person name="Van Aken S.E."/>
            <person name="Lovley D.R."/>
            <person name="Fraser C.M."/>
        </authorList>
    </citation>
    <scope>NUCLEOTIDE SEQUENCE [LARGE SCALE GENOMIC DNA]</scope>
    <source>
        <strain>ATCC 51573 / DSM 12127 / PCA</strain>
    </source>
</reference>
<dbReference type="EC" id="3.4.21.88" evidence="1"/>
<dbReference type="EMBL" id="AE017180">
    <property type="protein sequence ID" value="AAR33376.1"/>
    <property type="molecule type" value="Genomic_DNA"/>
</dbReference>
<dbReference type="RefSeq" id="NP_951103.1">
    <property type="nucleotide sequence ID" value="NC_002939.5"/>
</dbReference>
<dbReference type="RefSeq" id="WP_010940718.1">
    <property type="nucleotide sequence ID" value="NC_002939.5"/>
</dbReference>
<dbReference type="SMR" id="P61608"/>
<dbReference type="FunCoup" id="P61608">
    <property type="interactions" value="341"/>
</dbReference>
<dbReference type="STRING" id="243231.GSU0041"/>
<dbReference type="MEROPS" id="S24.001"/>
<dbReference type="EnsemblBacteria" id="AAR33376">
    <property type="protein sequence ID" value="AAR33376"/>
    <property type="gene ID" value="GSU0041"/>
</dbReference>
<dbReference type="KEGG" id="gsu:GSU0041"/>
<dbReference type="PATRIC" id="fig|243231.5.peg.41"/>
<dbReference type="eggNOG" id="COG1974">
    <property type="taxonomic scope" value="Bacteria"/>
</dbReference>
<dbReference type="HOGENOM" id="CLU_066192_45_1_7"/>
<dbReference type="InParanoid" id="P61608"/>
<dbReference type="OrthoDB" id="9802364at2"/>
<dbReference type="Proteomes" id="UP000000577">
    <property type="component" value="Chromosome"/>
</dbReference>
<dbReference type="CollecTF" id="EXPREG_00000b90"/>
<dbReference type="GO" id="GO:0032993">
    <property type="term" value="C:protein-DNA complex"/>
    <property type="evidence" value="ECO:0000315"/>
    <property type="project" value="CollecTF"/>
</dbReference>
<dbReference type="GO" id="GO:0001217">
    <property type="term" value="F:DNA-binding transcription repressor activity"/>
    <property type="evidence" value="ECO:0000318"/>
    <property type="project" value="GO_Central"/>
</dbReference>
<dbReference type="GO" id="GO:0043565">
    <property type="term" value="F:sequence-specific DNA binding"/>
    <property type="evidence" value="ECO:0000315"/>
    <property type="project" value="CollecTF"/>
</dbReference>
<dbReference type="GO" id="GO:0004252">
    <property type="term" value="F:serine-type endopeptidase activity"/>
    <property type="evidence" value="ECO:0007669"/>
    <property type="project" value="UniProtKB-UniRule"/>
</dbReference>
<dbReference type="GO" id="GO:0006281">
    <property type="term" value="P:DNA repair"/>
    <property type="evidence" value="ECO:0007669"/>
    <property type="project" value="UniProtKB-UniRule"/>
</dbReference>
<dbReference type="GO" id="GO:0006260">
    <property type="term" value="P:DNA replication"/>
    <property type="evidence" value="ECO:0007669"/>
    <property type="project" value="UniProtKB-UniRule"/>
</dbReference>
<dbReference type="GO" id="GO:0045892">
    <property type="term" value="P:negative regulation of DNA-templated transcription"/>
    <property type="evidence" value="ECO:0000318"/>
    <property type="project" value="GO_Central"/>
</dbReference>
<dbReference type="GO" id="GO:0006508">
    <property type="term" value="P:proteolysis"/>
    <property type="evidence" value="ECO:0007669"/>
    <property type="project" value="InterPro"/>
</dbReference>
<dbReference type="GO" id="GO:0009432">
    <property type="term" value="P:SOS response"/>
    <property type="evidence" value="ECO:0000318"/>
    <property type="project" value="GO_Central"/>
</dbReference>
<dbReference type="CDD" id="cd06529">
    <property type="entry name" value="S24_LexA-like"/>
    <property type="match status" value="1"/>
</dbReference>
<dbReference type="FunFam" id="1.10.10.10:FF:000009">
    <property type="entry name" value="LexA repressor"/>
    <property type="match status" value="1"/>
</dbReference>
<dbReference type="FunFam" id="2.10.109.10:FF:000001">
    <property type="entry name" value="LexA repressor"/>
    <property type="match status" value="1"/>
</dbReference>
<dbReference type="Gene3D" id="2.10.109.10">
    <property type="entry name" value="Umud Fragment, subunit A"/>
    <property type="match status" value="1"/>
</dbReference>
<dbReference type="Gene3D" id="1.10.10.10">
    <property type="entry name" value="Winged helix-like DNA-binding domain superfamily/Winged helix DNA-binding domain"/>
    <property type="match status" value="1"/>
</dbReference>
<dbReference type="HAMAP" id="MF_00015">
    <property type="entry name" value="LexA"/>
    <property type="match status" value="1"/>
</dbReference>
<dbReference type="InterPro" id="IPR006200">
    <property type="entry name" value="LexA"/>
</dbReference>
<dbReference type="InterPro" id="IPR039418">
    <property type="entry name" value="LexA-like"/>
</dbReference>
<dbReference type="InterPro" id="IPR036286">
    <property type="entry name" value="LexA/Signal_pep-like_sf"/>
</dbReference>
<dbReference type="InterPro" id="IPR006199">
    <property type="entry name" value="LexA_DNA-bd_dom"/>
</dbReference>
<dbReference type="InterPro" id="IPR050077">
    <property type="entry name" value="LexA_repressor"/>
</dbReference>
<dbReference type="InterPro" id="IPR006197">
    <property type="entry name" value="Peptidase_S24_LexA"/>
</dbReference>
<dbReference type="InterPro" id="IPR015927">
    <property type="entry name" value="Peptidase_S24_S26A/B/C"/>
</dbReference>
<dbReference type="InterPro" id="IPR036388">
    <property type="entry name" value="WH-like_DNA-bd_sf"/>
</dbReference>
<dbReference type="InterPro" id="IPR036390">
    <property type="entry name" value="WH_DNA-bd_sf"/>
</dbReference>
<dbReference type="NCBIfam" id="TIGR00498">
    <property type="entry name" value="lexA"/>
    <property type="match status" value="1"/>
</dbReference>
<dbReference type="PANTHER" id="PTHR33516">
    <property type="entry name" value="LEXA REPRESSOR"/>
    <property type="match status" value="1"/>
</dbReference>
<dbReference type="PANTHER" id="PTHR33516:SF2">
    <property type="entry name" value="LEXA REPRESSOR-RELATED"/>
    <property type="match status" value="1"/>
</dbReference>
<dbReference type="Pfam" id="PF01726">
    <property type="entry name" value="LexA_DNA_bind"/>
    <property type="match status" value="1"/>
</dbReference>
<dbReference type="Pfam" id="PF00717">
    <property type="entry name" value="Peptidase_S24"/>
    <property type="match status" value="1"/>
</dbReference>
<dbReference type="PRINTS" id="PR00726">
    <property type="entry name" value="LEXASERPTASE"/>
</dbReference>
<dbReference type="SUPFAM" id="SSF51306">
    <property type="entry name" value="LexA/Signal peptidase"/>
    <property type="match status" value="1"/>
</dbReference>
<dbReference type="SUPFAM" id="SSF46785">
    <property type="entry name" value="Winged helix' DNA-binding domain"/>
    <property type="match status" value="1"/>
</dbReference>
<name>LEXA1_GEOSL</name>
<gene>
    <name evidence="1" type="primary">lexA1</name>
    <name type="synonym">lexA-1</name>
    <name type="ordered locus">GSU0041</name>
</gene>
<evidence type="ECO:0000255" key="1">
    <source>
        <dbReference type="HAMAP-Rule" id="MF_00015"/>
    </source>
</evidence>
<keyword id="KW-0068">Autocatalytic cleavage</keyword>
<keyword id="KW-0227">DNA damage</keyword>
<keyword id="KW-0234">DNA repair</keyword>
<keyword id="KW-0235">DNA replication</keyword>
<keyword id="KW-0238">DNA-binding</keyword>
<keyword id="KW-0378">Hydrolase</keyword>
<keyword id="KW-1185">Reference proteome</keyword>
<keyword id="KW-0678">Repressor</keyword>
<keyword id="KW-0742">SOS response</keyword>
<keyword id="KW-0804">Transcription</keyword>
<keyword id="KW-0805">Transcription regulation</keyword>
<accession>P61608</accession>
<protein>
    <recommendedName>
        <fullName evidence="1">LexA repressor 1</fullName>
        <ecNumber evidence="1">3.4.21.88</ecNumber>
    </recommendedName>
</protein>
<proteinExistence type="inferred from homology"/>
<sequence length="201" mass="22058">MQELAPRQQQVLAFITGFIAENGYPPTLREIAAHLKISGTLGVSKHLEALERKGYLRREANSSRGIALVGRTDTALSLPVAGVVRAGLPQPAVEDIEEYFAIDRSMVRGGTFFLRVKGDSMINAAIVEGDLALVRPQATAENRDIVVAMVDGEATLKRFYRQRDQIRLQPENPNMDPIIIRPGEGDVAIIGKVVGIYRPLE</sequence>
<comment type="function">
    <text evidence="1">Represses a number of genes involved in the response to DNA damage (SOS response), including recA and lexA. In the presence of single-stranded DNA, RecA interacts with LexA causing an autocatalytic cleavage which disrupts the DNA-binding part of LexA, leading to derepression of the SOS regulon and eventually DNA repair.</text>
</comment>
<comment type="catalytic activity">
    <reaction evidence="1">
        <text>Hydrolysis of Ala-|-Gly bond in repressor LexA.</text>
        <dbReference type="EC" id="3.4.21.88"/>
    </reaction>
</comment>
<comment type="subunit">
    <text evidence="1">Homodimer.</text>
</comment>
<comment type="similarity">
    <text evidence="1">Belongs to the peptidase S24 family.</text>
</comment>